<accession>Q5JD38</accession>
<proteinExistence type="evidence at protein level"/>
<feature type="chain" id="PRO_0000407926" description="tRNA (guanine(9)-/adenine(9)-N1)-methyltransferase">
    <location>
        <begin position="1"/>
        <end position="370"/>
    </location>
</feature>
<feature type="domain" description="SAM-dependent MTase TRM10-type" evidence="1">
    <location>
        <begin position="87"/>
        <end position="292"/>
    </location>
</feature>
<feature type="helix" evidence="4">
    <location>
        <begin position="4"/>
        <end position="14"/>
    </location>
</feature>
<feature type="strand" evidence="4">
    <location>
        <begin position="19"/>
        <end position="25"/>
    </location>
</feature>
<feature type="helix" evidence="4">
    <location>
        <begin position="33"/>
        <end position="42"/>
    </location>
</feature>
<feature type="strand" evidence="4">
    <location>
        <begin position="45"/>
        <end position="50"/>
    </location>
</feature>
<feature type="strand" evidence="4">
    <location>
        <begin position="58"/>
        <end position="60"/>
    </location>
</feature>
<feature type="strand" evidence="4">
    <location>
        <begin position="65"/>
        <end position="67"/>
    </location>
</feature>
<feature type="strand" evidence="4">
    <location>
        <begin position="70"/>
        <end position="75"/>
    </location>
</feature>
<feature type="helix" evidence="4">
    <location>
        <begin position="76"/>
        <end position="78"/>
    </location>
</feature>
<feature type="turn" evidence="4">
    <location>
        <begin position="79"/>
        <end position="81"/>
    </location>
</feature>
<feature type="strand" evidence="4">
    <location>
        <begin position="82"/>
        <end position="86"/>
    </location>
</feature>
<feature type="helix" evidence="4">
    <location>
        <begin position="88"/>
        <end position="92"/>
    </location>
</feature>
<feature type="strand" evidence="5">
    <location>
        <begin position="100"/>
        <end position="104"/>
    </location>
</feature>
<feature type="helix" evidence="5">
    <location>
        <begin position="108"/>
        <end position="110"/>
    </location>
</feature>
<feature type="helix" evidence="5">
    <location>
        <begin position="113"/>
        <end position="133"/>
    </location>
</feature>
<feature type="strand" evidence="5">
    <location>
        <begin position="139"/>
        <end position="143"/>
    </location>
</feature>
<feature type="helix" evidence="5">
    <location>
        <begin position="146"/>
        <end position="149"/>
    </location>
</feature>
<feature type="strand" evidence="5">
    <location>
        <begin position="152"/>
        <end position="154"/>
    </location>
</feature>
<feature type="turn" evidence="4">
    <location>
        <begin position="156"/>
        <end position="158"/>
    </location>
</feature>
<feature type="strand" evidence="5">
    <location>
        <begin position="159"/>
        <end position="161"/>
    </location>
</feature>
<feature type="helix" evidence="5">
    <location>
        <begin position="166"/>
        <end position="172"/>
    </location>
</feature>
<feature type="strand" evidence="5">
    <location>
        <begin position="177"/>
        <end position="181"/>
    </location>
</feature>
<feature type="strand" evidence="5">
    <location>
        <begin position="186"/>
        <end position="188"/>
    </location>
</feature>
<feature type="helix" evidence="5">
    <location>
        <begin position="191"/>
        <end position="193"/>
    </location>
</feature>
<feature type="strand" evidence="5">
    <location>
        <begin position="197"/>
        <end position="202"/>
    </location>
</feature>
<feature type="helix" evidence="5">
    <location>
        <begin position="218"/>
        <end position="224"/>
    </location>
</feature>
<feature type="strand" evidence="5">
    <location>
        <begin position="228"/>
        <end position="233"/>
    </location>
</feature>
<feature type="helix" evidence="5">
    <location>
        <begin position="247"/>
        <end position="258"/>
    </location>
</feature>
<feature type="helix" evidence="5">
    <location>
        <begin position="264"/>
        <end position="270"/>
    </location>
</feature>
<gene>
    <name type="ordered locus">TK0422</name>
</gene>
<dbReference type="EC" id="2.1.1.218"/>
<dbReference type="EC" id="2.1.1.221"/>
<dbReference type="EMBL" id="AP006878">
    <property type="protein sequence ID" value="BAD84611.1"/>
    <property type="molecule type" value="Genomic_DNA"/>
</dbReference>
<dbReference type="RefSeq" id="WP_011249377.1">
    <property type="nucleotide sequence ID" value="NC_006624.1"/>
</dbReference>
<dbReference type="PDB" id="6EMS">
    <property type="method" value="X-ray"/>
    <property type="resolution" value="2.00 A"/>
    <property type="chains" value="A=1-344"/>
</dbReference>
<dbReference type="PDB" id="6EMT">
    <property type="method" value="X-ray"/>
    <property type="resolution" value="1.79 A"/>
    <property type="chains" value="A=97-272"/>
</dbReference>
<dbReference type="PDB" id="6EMU">
    <property type="method" value="X-ray"/>
    <property type="resolution" value="2.30 A"/>
    <property type="chains" value="A/B/C=97-272"/>
</dbReference>
<dbReference type="PDB" id="6EMV">
    <property type="method" value="X-ray"/>
    <property type="resolution" value="2.90 A"/>
    <property type="chains" value="A/B/C=97-272"/>
</dbReference>
<dbReference type="PDBsum" id="6EMS"/>
<dbReference type="PDBsum" id="6EMT"/>
<dbReference type="PDBsum" id="6EMU"/>
<dbReference type="PDBsum" id="6EMV"/>
<dbReference type="SMR" id="Q5JD38"/>
<dbReference type="STRING" id="69014.TK0422"/>
<dbReference type="EnsemblBacteria" id="BAD84611">
    <property type="protein sequence ID" value="BAD84611"/>
    <property type="gene ID" value="TK0422"/>
</dbReference>
<dbReference type="GeneID" id="78446932"/>
<dbReference type="KEGG" id="tko:TK0422"/>
<dbReference type="PATRIC" id="fig|69014.16.peg.414"/>
<dbReference type="eggNOG" id="arCOG00967">
    <property type="taxonomic scope" value="Archaea"/>
</dbReference>
<dbReference type="HOGENOM" id="CLU_061952_0_0_2"/>
<dbReference type="InParanoid" id="Q5JD38"/>
<dbReference type="OrthoDB" id="14987at2157"/>
<dbReference type="PhylomeDB" id="Q5JD38"/>
<dbReference type="BioCyc" id="MetaCyc:MONOMER-16682"/>
<dbReference type="BRENDA" id="2.1.1.218">
    <property type="organism ID" value="5246"/>
</dbReference>
<dbReference type="BRENDA" id="2.1.1.221">
    <property type="organism ID" value="5246"/>
</dbReference>
<dbReference type="Proteomes" id="UP000000536">
    <property type="component" value="Chromosome"/>
</dbReference>
<dbReference type="GO" id="GO:0005737">
    <property type="term" value="C:cytoplasm"/>
    <property type="evidence" value="ECO:0007669"/>
    <property type="project" value="UniProtKB-SubCell"/>
</dbReference>
<dbReference type="GO" id="GO:0160106">
    <property type="term" value="F:tRNA (adenine(9)-N1)-methyltransferase activity"/>
    <property type="evidence" value="ECO:0000314"/>
    <property type="project" value="UniProtKB"/>
</dbReference>
<dbReference type="GO" id="GO:0052905">
    <property type="term" value="F:tRNA (guanosine(9)-N1)-methyltransferase activity"/>
    <property type="evidence" value="ECO:0000314"/>
    <property type="project" value="UniProtKB"/>
</dbReference>
<dbReference type="GO" id="GO:0030488">
    <property type="term" value="P:tRNA methylation"/>
    <property type="evidence" value="ECO:0007669"/>
    <property type="project" value="InterPro"/>
</dbReference>
<dbReference type="GO" id="GO:0008033">
    <property type="term" value="P:tRNA processing"/>
    <property type="evidence" value="ECO:0000314"/>
    <property type="project" value="UniProtKB"/>
</dbReference>
<dbReference type="CDD" id="cd18099">
    <property type="entry name" value="Trm10arch"/>
    <property type="match status" value="1"/>
</dbReference>
<dbReference type="Gene3D" id="3.40.1280.30">
    <property type="match status" value="1"/>
</dbReference>
<dbReference type="InterPro" id="IPR028564">
    <property type="entry name" value="MT_TRM10-typ"/>
</dbReference>
<dbReference type="InterPro" id="IPR038459">
    <property type="entry name" value="MT_TRM10-typ_sf"/>
</dbReference>
<dbReference type="InterPro" id="IPR016742">
    <property type="entry name" value="tRNA_m1G_mtfrase_arc"/>
</dbReference>
<dbReference type="InterPro" id="IPR053618">
    <property type="entry name" value="tRNA_N1-methyltransferase"/>
</dbReference>
<dbReference type="NCBIfam" id="NF041140">
    <property type="entry name" value="Trm10AGmtase_Thcocales"/>
    <property type="match status" value="1"/>
</dbReference>
<dbReference type="PIRSF" id="PIRSF018978">
    <property type="entry name" value="tRNA_m1G_mtfrase_arc_prd"/>
    <property type="match status" value="1"/>
</dbReference>
<dbReference type="PROSITE" id="PS51675">
    <property type="entry name" value="SAM_MT_TRM10"/>
    <property type="match status" value="1"/>
</dbReference>
<comment type="function">
    <text evidence="2">Catalyzes the S-adenosyl-L-methionine-dependent formation of either N(1)-methyladenine or N(1)-methylguanine at position 9 (m1A9 or m1G9) in tRNA.</text>
</comment>
<comment type="catalytic activity">
    <reaction evidence="2">
        <text>adenosine(9) in tRNA + S-adenosyl-L-methionine = N(1)-methyladenosine(9) in tRNA + S-adenosyl-L-homocysteine + H(+)</text>
        <dbReference type="Rhea" id="RHEA:43148"/>
        <dbReference type="Rhea" id="RHEA-COMP:10363"/>
        <dbReference type="Rhea" id="RHEA-COMP:10364"/>
        <dbReference type="ChEBI" id="CHEBI:15378"/>
        <dbReference type="ChEBI" id="CHEBI:57856"/>
        <dbReference type="ChEBI" id="CHEBI:59789"/>
        <dbReference type="ChEBI" id="CHEBI:74411"/>
        <dbReference type="ChEBI" id="CHEBI:74491"/>
        <dbReference type="EC" id="2.1.1.218"/>
    </reaction>
</comment>
<comment type="catalytic activity">
    <reaction evidence="2">
        <text>guanosine(9) in tRNA + S-adenosyl-L-methionine = N(1)-methylguanosine(9) in tRNA + S-adenosyl-L-homocysteine + H(+)</text>
        <dbReference type="Rhea" id="RHEA:43156"/>
        <dbReference type="Rhea" id="RHEA-COMP:10367"/>
        <dbReference type="Rhea" id="RHEA-COMP:10368"/>
        <dbReference type="ChEBI" id="CHEBI:15378"/>
        <dbReference type="ChEBI" id="CHEBI:57856"/>
        <dbReference type="ChEBI" id="CHEBI:59789"/>
        <dbReference type="ChEBI" id="CHEBI:73542"/>
        <dbReference type="ChEBI" id="CHEBI:74269"/>
        <dbReference type="EC" id="2.1.1.221"/>
    </reaction>
</comment>
<comment type="subcellular location">
    <subcellularLocation>
        <location evidence="3">Cytoplasm</location>
    </subcellularLocation>
</comment>
<comment type="similarity">
    <text evidence="1">Belongs to the class IV-like SAM-binding methyltransferase superfamily. TRM10 family.</text>
</comment>
<name>TRM10_THEKO</name>
<keyword id="KW-0002">3D-structure</keyword>
<keyword id="KW-0963">Cytoplasm</keyword>
<keyword id="KW-0489">Methyltransferase</keyword>
<keyword id="KW-1185">Reference proteome</keyword>
<keyword id="KW-0949">S-adenosyl-L-methionine</keyword>
<keyword id="KW-0808">Transferase</keyword>
<keyword id="KW-0819">tRNA processing</keyword>
<organism>
    <name type="scientific">Thermococcus kodakarensis (strain ATCC BAA-918 / JCM 12380 / KOD1)</name>
    <name type="common">Pyrococcus kodakaraensis (strain KOD1)</name>
    <dbReference type="NCBI Taxonomy" id="69014"/>
    <lineage>
        <taxon>Archaea</taxon>
        <taxon>Methanobacteriati</taxon>
        <taxon>Methanobacteriota</taxon>
        <taxon>Thermococci</taxon>
        <taxon>Thermococcales</taxon>
        <taxon>Thermococcaceae</taxon>
        <taxon>Thermococcus</taxon>
    </lineage>
</organism>
<sequence>MKTLADVFREALKEKGISSIGTLSKRFRKSKNKLQDIAIEIVHGKGAVFRVPEKTAVAWDLNGNRVDGSYYAYAPLCMREKFEPVLTPEELREKLPDWPYFIIDLYHWDKHTQKEKGKICLQVNQSYGLLRDYFTGSELAVTWANEEFREMFHGPLDRITTYGGPTSEFLKENGINEVVLLDPWAEEVLSEKDFDVKAFIIGGIVDTGGNKKKTTPKIGEELESAGIKVRRRKIVLRGDVVGVPDRINRILGIILKMMVEGKSMDEAVYEMQEPLHARWRLRKELPKRATRYMVEGKVYRVVEKELFDEYSKWLKIRWEDFVKVLRELDLVALERKRIHHLNKISNARIINGKLHRVILLKRAAMLCYNC</sequence>
<reference key="1">
    <citation type="journal article" date="2005" name="Genome Res.">
        <title>Complete genome sequence of the hyperthermophilic archaeon Thermococcus kodakaraensis KOD1 and comparison with Pyrococcus genomes.</title>
        <authorList>
            <person name="Fukui T."/>
            <person name="Atomi H."/>
            <person name="Kanai T."/>
            <person name="Matsumi R."/>
            <person name="Fujiwara S."/>
            <person name="Imanaka T."/>
        </authorList>
    </citation>
    <scope>NUCLEOTIDE SEQUENCE [LARGE SCALE GENOMIC DNA]</scope>
    <source>
        <strain>ATCC BAA-918 / JCM 12380 / KOD1</strain>
    </source>
</reference>
<reference key="2">
    <citation type="journal article" date="2010" name="Nucleic Acids Res.">
        <title>New archaeal methyltransferases forming 1-methyladenosine or 1-methyladenosine and 1-methylguanosine at position 9 of tRNA.</title>
        <authorList>
            <person name="Kempenaers M."/>
            <person name="Roovers M."/>
            <person name="Oudjama Y."/>
            <person name="Tkaczuk K.L."/>
            <person name="Bujnicki J.M."/>
            <person name="Droogmans L."/>
        </authorList>
    </citation>
    <scope>FUNCTION</scope>
    <scope>CATALYTIC ACTIVITY</scope>
</reference>
<protein>
    <recommendedName>
        <fullName>tRNA (guanine(9)-/adenine(9)-N1)-methyltransferase</fullName>
        <ecNumber>2.1.1.218</ecNumber>
        <ecNumber>2.1.1.221</ecNumber>
    </recommendedName>
    <alternativeName>
        <fullName>tRNA(m1G9/m1A9)-methyltransferase</fullName>
        <shortName>tRNA(m1G9/m1A9)MTase</shortName>
    </alternativeName>
</protein>
<evidence type="ECO:0000255" key="1">
    <source>
        <dbReference type="PROSITE-ProRule" id="PRU01012"/>
    </source>
</evidence>
<evidence type="ECO:0000269" key="2">
    <source>
    </source>
</evidence>
<evidence type="ECO:0000305" key="3"/>
<evidence type="ECO:0007829" key="4">
    <source>
        <dbReference type="PDB" id="6EMS"/>
    </source>
</evidence>
<evidence type="ECO:0007829" key="5">
    <source>
        <dbReference type="PDB" id="6EMT"/>
    </source>
</evidence>